<proteinExistence type="inferred from homology"/>
<comment type="function">
    <text evidence="1">ATP-dependent specificity component of the Clp protease. It directs the protease to specific substrates. Can perform chaperone functions in the absence of ClpP.</text>
</comment>
<comment type="subunit">
    <text evidence="1">Component of the ClpX-ClpP complex. Forms a hexameric ring that, in the presence of ATP, binds to fourteen ClpP subunits assembled into a disk-like structure with a central cavity, resembling the structure of eukaryotic proteasomes.</text>
</comment>
<comment type="similarity">
    <text evidence="1">Belongs to the ClpX chaperone family.</text>
</comment>
<gene>
    <name evidence="1" type="primary">clpX</name>
    <name type="ordered locus">CLI_3369</name>
</gene>
<organism>
    <name type="scientific">Clostridium botulinum (strain Langeland / NCTC 10281 / Type F)</name>
    <dbReference type="NCBI Taxonomy" id="441772"/>
    <lineage>
        <taxon>Bacteria</taxon>
        <taxon>Bacillati</taxon>
        <taxon>Bacillota</taxon>
        <taxon>Clostridia</taxon>
        <taxon>Eubacteriales</taxon>
        <taxon>Clostridiaceae</taxon>
        <taxon>Clostridium</taxon>
    </lineage>
</organism>
<name>CLPX_CLOBL</name>
<feature type="chain" id="PRO_1000058335" description="ATP-dependent Clp protease ATP-binding subunit ClpX">
    <location>
        <begin position="1"/>
        <end position="429"/>
    </location>
</feature>
<feature type="domain" description="ClpX-type ZB" evidence="2">
    <location>
        <begin position="1"/>
        <end position="53"/>
    </location>
</feature>
<feature type="region of interest" description="Disordered" evidence="3">
    <location>
        <begin position="408"/>
        <end position="429"/>
    </location>
</feature>
<feature type="compositionally biased region" description="Basic residues" evidence="3">
    <location>
        <begin position="413"/>
        <end position="423"/>
    </location>
</feature>
<feature type="binding site" evidence="2">
    <location>
        <position position="12"/>
    </location>
    <ligand>
        <name>Zn(2+)</name>
        <dbReference type="ChEBI" id="CHEBI:29105"/>
    </ligand>
</feature>
<feature type="binding site" evidence="2">
    <location>
        <position position="15"/>
    </location>
    <ligand>
        <name>Zn(2+)</name>
        <dbReference type="ChEBI" id="CHEBI:29105"/>
    </ligand>
</feature>
<feature type="binding site" evidence="2">
    <location>
        <position position="34"/>
    </location>
    <ligand>
        <name>Zn(2+)</name>
        <dbReference type="ChEBI" id="CHEBI:29105"/>
    </ligand>
</feature>
<feature type="binding site" evidence="2">
    <location>
        <position position="37"/>
    </location>
    <ligand>
        <name>Zn(2+)</name>
        <dbReference type="ChEBI" id="CHEBI:29105"/>
    </ligand>
</feature>
<feature type="binding site" evidence="1">
    <location>
        <begin position="116"/>
        <end position="123"/>
    </location>
    <ligand>
        <name>ATP</name>
        <dbReference type="ChEBI" id="CHEBI:30616"/>
    </ligand>
</feature>
<keyword id="KW-0067">ATP-binding</keyword>
<keyword id="KW-0143">Chaperone</keyword>
<keyword id="KW-0479">Metal-binding</keyword>
<keyword id="KW-0547">Nucleotide-binding</keyword>
<keyword id="KW-0862">Zinc</keyword>
<protein>
    <recommendedName>
        <fullName evidence="1">ATP-dependent Clp protease ATP-binding subunit ClpX</fullName>
    </recommendedName>
</protein>
<dbReference type="EMBL" id="CP000728">
    <property type="protein sequence ID" value="ABS40378.1"/>
    <property type="molecule type" value="Genomic_DNA"/>
</dbReference>
<dbReference type="RefSeq" id="WP_003357457.1">
    <property type="nucleotide sequence ID" value="NC_009699.1"/>
</dbReference>
<dbReference type="SMR" id="A7GIH1"/>
<dbReference type="GeneID" id="5187485"/>
<dbReference type="KEGG" id="cbf:CLI_3369"/>
<dbReference type="HOGENOM" id="CLU_014218_8_2_9"/>
<dbReference type="Proteomes" id="UP000002410">
    <property type="component" value="Chromosome"/>
</dbReference>
<dbReference type="GO" id="GO:0009376">
    <property type="term" value="C:HslUV protease complex"/>
    <property type="evidence" value="ECO:0007669"/>
    <property type="project" value="TreeGrafter"/>
</dbReference>
<dbReference type="GO" id="GO:0005524">
    <property type="term" value="F:ATP binding"/>
    <property type="evidence" value="ECO:0007669"/>
    <property type="project" value="UniProtKB-UniRule"/>
</dbReference>
<dbReference type="GO" id="GO:0016887">
    <property type="term" value="F:ATP hydrolysis activity"/>
    <property type="evidence" value="ECO:0007669"/>
    <property type="project" value="InterPro"/>
</dbReference>
<dbReference type="GO" id="GO:0140662">
    <property type="term" value="F:ATP-dependent protein folding chaperone"/>
    <property type="evidence" value="ECO:0007669"/>
    <property type="project" value="InterPro"/>
</dbReference>
<dbReference type="GO" id="GO:0046983">
    <property type="term" value="F:protein dimerization activity"/>
    <property type="evidence" value="ECO:0007669"/>
    <property type="project" value="InterPro"/>
</dbReference>
<dbReference type="GO" id="GO:0051082">
    <property type="term" value="F:unfolded protein binding"/>
    <property type="evidence" value="ECO:0007669"/>
    <property type="project" value="UniProtKB-UniRule"/>
</dbReference>
<dbReference type="GO" id="GO:0008270">
    <property type="term" value="F:zinc ion binding"/>
    <property type="evidence" value="ECO:0007669"/>
    <property type="project" value="InterPro"/>
</dbReference>
<dbReference type="GO" id="GO:0051301">
    <property type="term" value="P:cell division"/>
    <property type="evidence" value="ECO:0007669"/>
    <property type="project" value="TreeGrafter"/>
</dbReference>
<dbReference type="GO" id="GO:0051603">
    <property type="term" value="P:proteolysis involved in protein catabolic process"/>
    <property type="evidence" value="ECO:0007669"/>
    <property type="project" value="TreeGrafter"/>
</dbReference>
<dbReference type="CDD" id="cd19497">
    <property type="entry name" value="RecA-like_ClpX"/>
    <property type="match status" value="1"/>
</dbReference>
<dbReference type="FunFam" id="1.10.8.60:FF:000002">
    <property type="entry name" value="ATP-dependent Clp protease ATP-binding subunit ClpX"/>
    <property type="match status" value="1"/>
</dbReference>
<dbReference type="FunFam" id="3.40.50.300:FF:000005">
    <property type="entry name" value="ATP-dependent Clp protease ATP-binding subunit ClpX"/>
    <property type="match status" value="1"/>
</dbReference>
<dbReference type="Gene3D" id="1.10.8.60">
    <property type="match status" value="1"/>
</dbReference>
<dbReference type="Gene3D" id="6.20.220.10">
    <property type="entry name" value="ClpX chaperone, C4-type zinc finger domain"/>
    <property type="match status" value="1"/>
</dbReference>
<dbReference type="Gene3D" id="3.40.50.300">
    <property type="entry name" value="P-loop containing nucleotide triphosphate hydrolases"/>
    <property type="match status" value="1"/>
</dbReference>
<dbReference type="HAMAP" id="MF_00175">
    <property type="entry name" value="ClpX"/>
    <property type="match status" value="1"/>
</dbReference>
<dbReference type="InterPro" id="IPR003593">
    <property type="entry name" value="AAA+_ATPase"/>
</dbReference>
<dbReference type="InterPro" id="IPR050052">
    <property type="entry name" value="ATP-dep_Clp_protease_ClpX"/>
</dbReference>
<dbReference type="InterPro" id="IPR003959">
    <property type="entry name" value="ATPase_AAA_core"/>
</dbReference>
<dbReference type="InterPro" id="IPR019489">
    <property type="entry name" value="Clp_ATPase_C"/>
</dbReference>
<dbReference type="InterPro" id="IPR004487">
    <property type="entry name" value="Clp_protease_ATP-bd_su_ClpX"/>
</dbReference>
<dbReference type="InterPro" id="IPR046425">
    <property type="entry name" value="ClpX_bact"/>
</dbReference>
<dbReference type="InterPro" id="IPR027417">
    <property type="entry name" value="P-loop_NTPase"/>
</dbReference>
<dbReference type="InterPro" id="IPR010603">
    <property type="entry name" value="Znf_CppX_C4"/>
</dbReference>
<dbReference type="InterPro" id="IPR038366">
    <property type="entry name" value="Znf_CppX_C4_sf"/>
</dbReference>
<dbReference type="NCBIfam" id="TIGR00382">
    <property type="entry name" value="clpX"/>
    <property type="match status" value="1"/>
</dbReference>
<dbReference type="NCBIfam" id="NF003745">
    <property type="entry name" value="PRK05342.1"/>
    <property type="match status" value="1"/>
</dbReference>
<dbReference type="PANTHER" id="PTHR48102:SF7">
    <property type="entry name" value="ATP-DEPENDENT CLP PROTEASE ATP-BINDING SUBUNIT CLPX-LIKE, MITOCHONDRIAL"/>
    <property type="match status" value="1"/>
</dbReference>
<dbReference type="PANTHER" id="PTHR48102">
    <property type="entry name" value="ATP-DEPENDENT CLP PROTEASE ATP-BINDING SUBUNIT CLPX-LIKE, MITOCHONDRIAL-RELATED"/>
    <property type="match status" value="1"/>
</dbReference>
<dbReference type="Pfam" id="PF07724">
    <property type="entry name" value="AAA_2"/>
    <property type="match status" value="1"/>
</dbReference>
<dbReference type="Pfam" id="PF10431">
    <property type="entry name" value="ClpB_D2-small"/>
    <property type="match status" value="1"/>
</dbReference>
<dbReference type="Pfam" id="PF06689">
    <property type="entry name" value="zf-C4_ClpX"/>
    <property type="match status" value="1"/>
</dbReference>
<dbReference type="SMART" id="SM00382">
    <property type="entry name" value="AAA"/>
    <property type="match status" value="1"/>
</dbReference>
<dbReference type="SMART" id="SM01086">
    <property type="entry name" value="ClpB_D2-small"/>
    <property type="match status" value="1"/>
</dbReference>
<dbReference type="SMART" id="SM00994">
    <property type="entry name" value="zf-C4_ClpX"/>
    <property type="match status" value="1"/>
</dbReference>
<dbReference type="SUPFAM" id="SSF57716">
    <property type="entry name" value="Glucocorticoid receptor-like (DNA-binding domain)"/>
    <property type="match status" value="1"/>
</dbReference>
<dbReference type="SUPFAM" id="SSF52540">
    <property type="entry name" value="P-loop containing nucleoside triphosphate hydrolases"/>
    <property type="match status" value="1"/>
</dbReference>
<dbReference type="PROSITE" id="PS51902">
    <property type="entry name" value="CLPX_ZB"/>
    <property type="match status" value="1"/>
</dbReference>
<evidence type="ECO:0000255" key="1">
    <source>
        <dbReference type="HAMAP-Rule" id="MF_00175"/>
    </source>
</evidence>
<evidence type="ECO:0000255" key="2">
    <source>
        <dbReference type="PROSITE-ProRule" id="PRU01250"/>
    </source>
</evidence>
<evidence type="ECO:0000256" key="3">
    <source>
        <dbReference type="SAM" id="MobiDB-lite"/>
    </source>
</evidence>
<reference key="1">
    <citation type="submission" date="2007-06" db="EMBL/GenBank/DDBJ databases">
        <authorList>
            <person name="Brinkac L.M."/>
            <person name="Daugherty S."/>
            <person name="Dodson R.J."/>
            <person name="Madupu R."/>
            <person name="Brown J.L."/>
            <person name="Bruce D."/>
            <person name="Detter C."/>
            <person name="Munk C."/>
            <person name="Smith L.A."/>
            <person name="Smith T.J."/>
            <person name="White O."/>
            <person name="Brettin T.S."/>
        </authorList>
    </citation>
    <scope>NUCLEOTIDE SEQUENCE [LARGE SCALE GENOMIC DNA]</scope>
    <source>
        <strain>Langeland / NCTC 10281 / Type F</strain>
    </source>
</reference>
<sequence>MSKLDEKKQLKCSFCGKTQDQVRRLIAGPGVYICDECIELCSEIINDEFEDDIQVDLTSLPKPTEIKTYLDQYVIGQEDAKKSLSVAVYNHYKRINSNTNNDDVELQKSNILLLGPTGSGKTLLAQTLAKFLNVPFAIADATTLTEAGYVGEDVENILLKLIQNADYDIEKAEKGIVYIDEIDKIARKSENPSITRDVSGEGVQQALLKILEGTVAAVPPQGGRKHPHQEFIQINTTNILFICGGAFDGVDKIIERRTRTSSLGFGAEIQSKKEKDLGKLLKDIMPGDLLKFGLIPEFIGRLPIVVTLDKLDREALIKILTEPKNALVKQYKKLFELDDVELEFNQEALKEIADEAINRNTGARGLRAIIEDMMREIMFDIPSQENIGKVIVNEDCIKTKKPELIEAEGGKRLPIKPKKGKKRKDSETA</sequence>
<accession>A7GIH1</accession>